<comment type="function">
    <text evidence="2">Involved in base excision repair of DNA damaged by oxidation or by mutagenic agents. Acts as a DNA glycosylase that recognizes and removes damaged bases. Has a preference for oxidized purines, such as 7,8-dihydro-8-oxoguanine (8-oxoG). Has AP (apurinic/apyrimidinic) lyase activity and introduces nicks in the DNA strand. Cleaves the DNA backbone by beta-delta elimination to generate a single-strand break at the site of the removed base with both 3'- and 5'-phosphates.</text>
</comment>
<comment type="catalytic activity">
    <reaction evidence="2">
        <text>Hydrolysis of DNA containing ring-opened 7-methylguanine residues, releasing 2,6-diamino-4-hydroxy-5-(N-methyl)formamidopyrimidine.</text>
        <dbReference type="EC" id="3.2.2.23"/>
    </reaction>
</comment>
<comment type="catalytic activity">
    <reaction evidence="2">
        <text>2'-deoxyribonucleotide-(2'-deoxyribose 5'-phosphate)-2'-deoxyribonucleotide-DNA = a 3'-end 2'-deoxyribonucleotide-(2,3-dehydro-2,3-deoxyribose 5'-phosphate)-DNA + a 5'-end 5'-phospho-2'-deoxyribonucleoside-DNA + H(+)</text>
        <dbReference type="Rhea" id="RHEA:66592"/>
        <dbReference type="Rhea" id="RHEA-COMP:13180"/>
        <dbReference type="Rhea" id="RHEA-COMP:16897"/>
        <dbReference type="Rhea" id="RHEA-COMP:17067"/>
        <dbReference type="ChEBI" id="CHEBI:15378"/>
        <dbReference type="ChEBI" id="CHEBI:136412"/>
        <dbReference type="ChEBI" id="CHEBI:157695"/>
        <dbReference type="ChEBI" id="CHEBI:167181"/>
        <dbReference type="EC" id="4.2.99.18"/>
    </reaction>
</comment>
<comment type="cofactor">
    <cofactor evidence="2">
        <name>Zn(2+)</name>
        <dbReference type="ChEBI" id="CHEBI:29105"/>
    </cofactor>
    <text evidence="2">Binds 1 zinc ion per subunit.</text>
</comment>
<comment type="subunit">
    <text evidence="2">Monomer.</text>
</comment>
<comment type="similarity">
    <text evidence="2">Belongs to the FPG family.</text>
</comment>
<keyword id="KW-0227">DNA damage</keyword>
<keyword id="KW-0234">DNA repair</keyword>
<keyword id="KW-0238">DNA-binding</keyword>
<keyword id="KW-0326">Glycosidase</keyword>
<keyword id="KW-0378">Hydrolase</keyword>
<keyword id="KW-0456">Lyase</keyword>
<keyword id="KW-0479">Metal-binding</keyword>
<keyword id="KW-0511">Multifunctional enzyme</keyword>
<keyword id="KW-0862">Zinc</keyword>
<keyword id="KW-0863">Zinc-finger</keyword>
<organism>
    <name type="scientific">Yersinia pseudotuberculosis serotype O:3 (strain YPIII)</name>
    <dbReference type="NCBI Taxonomy" id="502800"/>
    <lineage>
        <taxon>Bacteria</taxon>
        <taxon>Pseudomonadati</taxon>
        <taxon>Pseudomonadota</taxon>
        <taxon>Gammaproteobacteria</taxon>
        <taxon>Enterobacterales</taxon>
        <taxon>Yersiniaceae</taxon>
        <taxon>Yersinia</taxon>
    </lineage>
</organism>
<dbReference type="EC" id="3.2.2.23" evidence="2"/>
<dbReference type="EC" id="4.2.99.18" evidence="2"/>
<dbReference type="EMBL" id="CP000950">
    <property type="protein sequence ID" value="ACA70411.1"/>
    <property type="molecule type" value="Genomic_DNA"/>
</dbReference>
<dbReference type="RefSeq" id="WP_002208989.1">
    <property type="nucleotide sequence ID" value="NZ_CP009792.1"/>
</dbReference>
<dbReference type="SMR" id="B1JQX0"/>
<dbReference type="GeneID" id="57974538"/>
<dbReference type="KEGG" id="ypy:YPK_4152"/>
<dbReference type="PATRIC" id="fig|502800.11.peg.503"/>
<dbReference type="GO" id="GO:0034039">
    <property type="term" value="F:8-oxo-7,8-dihydroguanine DNA N-glycosylase activity"/>
    <property type="evidence" value="ECO:0007669"/>
    <property type="project" value="TreeGrafter"/>
</dbReference>
<dbReference type="GO" id="GO:0140078">
    <property type="term" value="F:class I DNA-(apurinic or apyrimidinic site) endonuclease activity"/>
    <property type="evidence" value="ECO:0007669"/>
    <property type="project" value="UniProtKB-EC"/>
</dbReference>
<dbReference type="GO" id="GO:0003684">
    <property type="term" value="F:damaged DNA binding"/>
    <property type="evidence" value="ECO:0007669"/>
    <property type="project" value="InterPro"/>
</dbReference>
<dbReference type="GO" id="GO:0008270">
    <property type="term" value="F:zinc ion binding"/>
    <property type="evidence" value="ECO:0007669"/>
    <property type="project" value="UniProtKB-UniRule"/>
</dbReference>
<dbReference type="GO" id="GO:0006284">
    <property type="term" value="P:base-excision repair"/>
    <property type="evidence" value="ECO:0007669"/>
    <property type="project" value="InterPro"/>
</dbReference>
<dbReference type="CDD" id="cd08966">
    <property type="entry name" value="EcFpg-like_N"/>
    <property type="match status" value="1"/>
</dbReference>
<dbReference type="FunFam" id="1.10.8.50:FF:000003">
    <property type="entry name" value="Formamidopyrimidine-DNA glycosylase"/>
    <property type="match status" value="1"/>
</dbReference>
<dbReference type="FunFam" id="3.20.190.10:FF:000001">
    <property type="entry name" value="Formamidopyrimidine-DNA glycosylase"/>
    <property type="match status" value="1"/>
</dbReference>
<dbReference type="Gene3D" id="1.10.8.50">
    <property type="match status" value="1"/>
</dbReference>
<dbReference type="Gene3D" id="3.20.190.10">
    <property type="entry name" value="MutM-like, N-terminal"/>
    <property type="match status" value="1"/>
</dbReference>
<dbReference type="HAMAP" id="MF_00103">
    <property type="entry name" value="Fapy_DNA_glycosyl"/>
    <property type="match status" value="1"/>
</dbReference>
<dbReference type="InterPro" id="IPR015886">
    <property type="entry name" value="DNA_glyclase/AP_lyase_DNA-bd"/>
</dbReference>
<dbReference type="InterPro" id="IPR015887">
    <property type="entry name" value="DNA_glyclase_Znf_dom_DNA_BS"/>
</dbReference>
<dbReference type="InterPro" id="IPR020629">
    <property type="entry name" value="Formamido-pyr_DNA_Glyclase"/>
</dbReference>
<dbReference type="InterPro" id="IPR012319">
    <property type="entry name" value="FPG_cat"/>
</dbReference>
<dbReference type="InterPro" id="IPR035937">
    <property type="entry name" value="MutM-like_N-ter"/>
</dbReference>
<dbReference type="InterPro" id="IPR010979">
    <property type="entry name" value="Ribosomal_uS13-like_H2TH"/>
</dbReference>
<dbReference type="InterPro" id="IPR000214">
    <property type="entry name" value="Znf_DNA_glyclase/AP_lyase"/>
</dbReference>
<dbReference type="InterPro" id="IPR010663">
    <property type="entry name" value="Znf_FPG/IleRS"/>
</dbReference>
<dbReference type="NCBIfam" id="TIGR00577">
    <property type="entry name" value="fpg"/>
    <property type="match status" value="1"/>
</dbReference>
<dbReference type="NCBIfam" id="NF002211">
    <property type="entry name" value="PRK01103.1"/>
    <property type="match status" value="1"/>
</dbReference>
<dbReference type="PANTHER" id="PTHR22993">
    <property type="entry name" value="FORMAMIDOPYRIMIDINE-DNA GLYCOSYLASE"/>
    <property type="match status" value="1"/>
</dbReference>
<dbReference type="PANTHER" id="PTHR22993:SF9">
    <property type="entry name" value="FORMAMIDOPYRIMIDINE-DNA GLYCOSYLASE"/>
    <property type="match status" value="1"/>
</dbReference>
<dbReference type="Pfam" id="PF01149">
    <property type="entry name" value="Fapy_DNA_glyco"/>
    <property type="match status" value="1"/>
</dbReference>
<dbReference type="Pfam" id="PF06831">
    <property type="entry name" value="H2TH"/>
    <property type="match status" value="1"/>
</dbReference>
<dbReference type="Pfam" id="PF06827">
    <property type="entry name" value="zf-FPG_IleRS"/>
    <property type="match status" value="1"/>
</dbReference>
<dbReference type="SMART" id="SM00898">
    <property type="entry name" value="Fapy_DNA_glyco"/>
    <property type="match status" value="1"/>
</dbReference>
<dbReference type="SMART" id="SM01232">
    <property type="entry name" value="H2TH"/>
    <property type="match status" value="1"/>
</dbReference>
<dbReference type="SUPFAM" id="SSF57716">
    <property type="entry name" value="Glucocorticoid receptor-like (DNA-binding domain)"/>
    <property type="match status" value="1"/>
</dbReference>
<dbReference type="SUPFAM" id="SSF81624">
    <property type="entry name" value="N-terminal domain of MutM-like DNA repair proteins"/>
    <property type="match status" value="1"/>
</dbReference>
<dbReference type="SUPFAM" id="SSF46946">
    <property type="entry name" value="S13-like H2TH domain"/>
    <property type="match status" value="1"/>
</dbReference>
<dbReference type="PROSITE" id="PS51068">
    <property type="entry name" value="FPG_CAT"/>
    <property type="match status" value="1"/>
</dbReference>
<dbReference type="PROSITE" id="PS01242">
    <property type="entry name" value="ZF_FPG_1"/>
    <property type="match status" value="1"/>
</dbReference>
<dbReference type="PROSITE" id="PS51066">
    <property type="entry name" value="ZF_FPG_2"/>
    <property type="match status" value="1"/>
</dbReference>
<gene>
    <name evidence="2" type="primary">mutM</name>
    <name evidence="2" type="synonym">fpg</name>
    <name type="ordered locus">YPK_4152</name>
</gene>
<reference key="1">
    <citation type="submission" date="2008-02" db="EMBL/GenBank/DDBJ databases">
        <title>Complete sequence of Yersinia pseudotuberculosis YPIII.</title>
        <authorList>
            <consortium name="US DOE Joint Genome Institute"/>
            <person name="Copeland A."/>
            <person name="Lucas S."/>
            <person name="Lapidus A."/>
            <person name="Glavina del Rio T."/>
            <person name="Dalin E."/>
            <person name="Tice H."/>
            <person name="Bruce D."/>
            <person name="Goodwin L."/>
            <person name="Pitluck S."/>
            <person name="Munk A.C."/>
            <person name="Brettin T."/>
            <person name="Detter J.C."/>
            <person name="Han C."/>
            <person name="Tapia R."/>
            <person name="Schmutz J."/>
            <person name="Larimer F."/>
            <person name="Land M."/>
            <person name="Hauser L."/>
            <person name="Challacombe J.F."/>
            <person name="Green L."/>
            <person name="Lindler L.E."/>
            <person name="Nikolich M.P."/>
            <person name="Richardson P."/>
        </authorList>
    </citation>
    <scope>NUCLEOTIDE SEQUENCE [LARGE SCALE GENOMIC DNA]</scope>
    <source>
        <strain>YPIII</strain>
    </source>
</reference>
<accession>B1JQX0</accession>
<evidence type="ECO:0000250" key="1"/>
<evidence type="ECO:0000255" key="2">
    <source>
        <dbReference type="HAMAP-Rule" id="MF_00103"/>
    </source>
</evidence>
<sequence length="269" mass="30111">MPELPEVETSRRGIEPYLVGQTILYAVVRNARLRWPVSDEILTLSDQPVLSVQRRAKYLLLELPKGWIIIHLGMSGSLRVLSEETAAEKHDHVDLVVSNGKILRYTDPRRFGAWLWAKDLETSNVLAHLGPEPLSDEFTAQYLFDKSRNKRTLIKPWLMDNKVVVGVGNIYASESLFAAGILPDRAAGSLTDAESVLLVATIKAVLLHSIEQGGTTLRDFLQSDGKPGYFAQELQVYGRAGEPCRQCGHPIEIAKHGQRSTFFCRHCQH</sequence>
<name>FPG_YERPY</name>
<protein>
    <recommendedName>
        <fullName evidence="2">Formamidopyrimidine-DNA glycosylase</fullName>
        <shortName evidence="2">Fapy-DNA glycosylase</shortName>
        <ecNumber evidence="2">3.2.2.23</ecNumber>
    </recommendedName>
    <alternativeName>
        <fullName evidence="2">DNA-(apurinic or apyrimidinic site) lyase MutM</fullName>
        <shortName evidence="2">AP lyase MutM</shortName>
        <ecNumber evidence="2">4.2.99.18</ecNumber>
    </alternativeName>
</protein>
<feature type="initiator methionine" description="Removed" evidence="1">
    <location>
        <position position="1"/>
    </location>
</feature>
<feature type="chain" id="PRO_1000094090" description="Formamidopyrimidine-DNA glycosylase">
    <location>
        <begin position="2"/>
        <end position="269"/>
    </location>
</feature>
<feature type="zinc finger region" description="FPG-type" evidence="2">
    <location>
        <begin position="235"/>
        <end position="269"/>
    </location>
</feature>
<feature type="active site" description="Schiff-base intermediate with DNA" evidence="2">
    <location>
        <position position="2"/>
    </location>
</feature>
<feature type="active site" description="Proton donor" evidence="2">
    <location>
        <position position="3"/>
    </location>
</feature>
<feature type="active site" description="Proton donor; for beta-elimination activity" evidence="2">
    <location>
        <position position="57"/>
    </location>
</feature>
<feature type="active site" description="Proton donor; for delta-elimination activity" evidence="2">
    <location>
        <position position="259"/>
    </location>
</feature>
<feature type="binding site" evidence="2">
    <location>
        <position position="90"/>
    </location>
    <ligand>
        <name>DNA</name>
        <dbReference type="ChEBI" id="CHEBI:16991"/>
    </ligand>
</feature>
<feature type="binding site" evidence="2">
    <location>
        <position position="109"/>
    </location>
    <ligand>
        <name>DNA</name>
        <dbReference type="ChEBI" id="CHEBI:16991"/>
    </ligand>
</feature>
<feature type="binding site" evidence="2">
    <location>
        <position position="150"/>
    </location>
    <ligand>
        <name>DNA</name>
        <dbReference type="ChEBI" id="CHEBI:16991"/>
    </ligand>
</feature>
<proteinExistence type="inferred from homology"/>